<keyword id="KW-0131">Cell cycle</keyword>
<keyword id="KW-0132">Cell division</keyword>
<keyword id="KW-1185">Reference proteome</keyword>
<dbReference type="EMBL" id="CP000448">
    <property type="protein sequence ID" value="ABI68934.1"/>
    <property type="molecule type" value="Genomic_DNA"/>
</dbReference>
<dbReference type="RefSeq" id="WP_011641032.1">
    <property type="nucleotide sequence ID" value="NC_008346.1"/>
</dbReference>
<dbReference type="STRING" id="335541.Swol_1635"/>
<dbReference type="KEGG" id="swo:Swol_1635"/>
<dbReference type="eggNOG" id="COG0851">
    <property type="taxonomic scope" value="Bacteria"/>
</dbReference>
<dbReference type="HOGENOM" id="CLU_137929_1_1_9"/>
<dbReference type="OrthoDB" id="9796578at2"/>
<dbReference type="Proteomes" id="UP000001968">
    <property type="component" value="Chromosome"/>
</dbReference>
<dbReference type="GO" id="GO:0051301">
    <property type="term" value="P:cell division"/>
    <property type="evidence" value="ECO:0007669"/>
    <property type="project" value="UniProtKB-KW"/>
</dbReference>
<dbReference type="GO" id="GO:0032955">
    <property type="term" value="P:regulation of division septum assembly"/>
    <property type="evidence" value="ECO:0007669"/>
    <property type="project" value="InterPro"/>
</dbReference>
<dbReference type="Gene3D" id="3.30.1070.10">
    <property type="entry name" value="Cell division topological specificity factor MinE"/>
    <property type="match status" value="1"/>
</dbReference>
<dbReference type="HAMAP" id="MF_00262">
    <property type="entry name" value="MinE"/>
    <property type="match status" value="1"/>
</dbReference>
<dbReference type="InterPro" id="IPR005527">
    <property type="entry name" value="MinE"/>
</dbReference>
<dbReference type="InterPro" id="IPR036707">
    <property type="entry name" value="MinE_sf"/>
</dbReference>
<dbReference type="NCBIfam" id="TIGR01215">
    <property type="entry name" value="minE"/>
    <property type="match status" value="1"/>
</dbReference>
<dbReference type="Pfam" id="PF03776">
    <property type="entry name" value="MinE"/>
    <property type="match status" value="1"/>
</dbReference>
<dbReference type="SUPFAM" id="SSF55229">
    <property type="entry name" value="Cell division protein MinE topological specificity domain"/>
    <property type="match status" value="1"/>
</dbReference>
<sequence length="90" mass="10341">MLDIINRLLGRENAGSRDIARERLRLVLIHDRASVSPNFLNALKEELIRVIREYMEIDEESLIVDLENEENSVALVANIPIRGFKRAANE</sequence>
<feature type="chain" id="PRO_0000298207" description="Cell division topological specificity factor 2">
    <location>
        <begin position="1"/>
        <end position="90"/>
    </location>
</feature>
<accession>Q0AWH0</accession>
<proteinExistence type="inferred from homology"/>
<reference key="1">
    <citation type="journal article" date="2010" name="Environ. Microbiol.">
        <title>The genome of Syntrophomonas wolfei: new insights into syntrophic metabolism and biohydrogen production.</title>
        <authorList>
            <person name="Sieber J.R."/>
            <person name="Sims D.R."/>
            <person name="Han C."/>
            <person name="Kim E."/>
            <person name="Lykidis A."/>
            <person name="Lapidus A.L."/>
            <person name="McDonnald E."/>
            <person name="Rohlin L."/>
            <person name="Culley D.E."/>
            <person name="Gunsalus R."/>
            <person name="McInerney M.J."/>
        </authorList>
    </citation>
    <scope>NUCLEOTIDE SEQUENCE [LARGE SCALE GENOMIC DNA]</scope>
    <source>
        <strain>DSM 2245B / Goettingen</strain>
    </source>
</reference>
<name>MINE2_SYNWW</name>
<comment type="function">
    <text evidence="1">Prevents the cell division inhibition by proteins MinC and MinD at internal division sites while permitting inhibition at polar sites. This ensures cell division at the proper site by restricting the formation of a division septum at the midpoint of the long axis of the cell.</text>
</comment>
<comment type="similarity">
    <text evidence="1">Belongs to the MinE family.</text>
</comment>
<protein>
    <recommendedName>
        <fullName evidence="1">Cell division topological specificity factor 2</fullName>
    </recommendedName>
</protein>
<evidence type="ECO:0000255" key="1">
    <source>
        <dbReference type="HAMAP-Rule" id="MF_00262"/>
    </source>
</evidence>
<organism>
    <name type="scientific">Syntrophomonas wolfei subsp. wolfei (strain DSM 2245B / Goettingen)</name>
    <dbReference type="NCBI Taxonomy" id="335541"/>
    <lineage>
        <taxon>Bacteria</taxon>
        <taxon>Bacillati</taxon>
        <taxon>Bacillota</taxon>
        <taxon>Clostridia</taxon>
        <taxon>Eubacteriales</taxon>
        <taxon>Syntrophomonadaceae</taxon>
        <taxon>Syntrophomonas</taxon>
    </lineage>
</organism>
<gene>
    <name evidence="1" type="primary">minE2</name>
    <name type="ordered locus">Swol_1635</name>
</gene>